<gene>
    <name evidence="1" type="primary">rnhB</name>
    <name type="ordered locus">MUL_2054</name>
</gene>
<evidence type="ECO:0000255" key="1">
    <source>
        <dbReference type="HAMAP-Rule" id="MF_00052"/>
    </source>
</evidence>
<evidence type="ECO:0000255" key="2">
    <source>
        <dbReference type="PROSITE-ProRule" id="PRU01319"/>
    </source>
</evidence>
<evidence type="ECO:0000256" key="3">
    <source>
        <dbReference type="SAM" id="MobiDB-lite"/>
    </source>
</evidence>
<dbReference type="EC" id="3.1.26.4" evidence="1"/>
<dbReference type="EMBL" id="CP000325">
    <property type="protein sequence ID" value="ABL04489.1"/>
    <property type="molecule type" value="Genomic_DNA"/>
</dbReference>
<dbReference type="SMR" id="A0PQ70"/>
<dbReference type="KEGG" id="mul:MUL_2054"/>
<dbReference type="eggNOG" id="COG0164">
    <property type="taxonomic scope" value="Bacteria"/>
</dbReference>
<dbReference type="HOGENOM" id="CLU_036532_1_0_11"/>
<dbReference type="Proteomes" id="UP000000765">
    <property type="component" value="Chromosome"/>
</dbReference>
<dbReference type="GO" id="GO:0005737">
    <property type="term" value="C:cytoplasm"/>
    <property type="evidence" value="ECO:0007669"/>
    <property type="project" value="UniProtKB-SubCell"/>
</dbReference>
<dbReference type="GO" id="GO:0032299">
    <property type="term" value="C:ribonuclease H2 complex"/>
    <property type="evidence" value="ECO:0007669"/>
    <property type="project" value="TreeGrafter"/>
</dbReference>
<dbReference type="GO" id="GO:0030145">
    <property type="term" value="F:manganese ion binding"/>
    <property type="evidence" value="ECO:0007669"/>
    <property type="project" value="UniProtKB-UniRule"/>
</dbReference>
<dbReference type="GO" id="GO:0003723">
    <property type="term" value="F:RNA binding"/>
    <property type="evidence" value="ECO:0007669"/>
    <property type="project" value="InterPro"/>
</dbReference>
<dbReference type="GO" id="GO:0004523">
    <property type="term" value="F:RNA-DNA hybrid ribonuclease activity"/>
    <property type="evidence" value="ECO:0007669"/>
    <property type="project" value="UniProtKB-UniRule"/>
</dbReference>
<dbReference type="GO" id="GO:0043137">
    <property type="term" value="P:DNA replication, removal of RNA primer"/>
    <property type="evidence" value="ECO:0007669"/>
    <property type="project" value="TreeGrafter"/>
</dbReference>
<dbReference type="GO" id="GO:0006298">
    <property type="term" value="P:mismatch repair"/>
    <property type="evidence" value="ECO:0007669"/>
    <property type="project" value="TreeGrafter"/>
</dbReference>
<dbReference type="CDD" id="cd07182">
    <property type="entry name" value="RNase_HII_bacteria_HII_like"/>
    <property type="match status" value="1"/>
</dbReference>
<dbReference type="FunFam" id="3.30.420.10:FF:000113">
    <property type="entry name" value="Ribonuclease HII"/>
    <property type="match status" value="1"/>
</dbReference>
<dbReference type="Gene3D" id="3.30.420.10">
    <property type="entry name" value="Ribonuclease H-like superfamily/Ribonuclease H"/>
    <property type="match status" value="1"/>
</dbReference>
<dbReference type="HAMAP" id="MF_00052_B">
    <property type="entry name" value="RNase_HII_B"/>
    <property type="match status" value="1"/>
</dbReference>
<dbReference type="InterPro" id="IPR022898">
    <property type="entry name" value="RNase_HII"/>
</dbReference>
<dbReference type="InterPro" id="IPR001352">
    <property type="entry name" value="RNase_HII/HIII"/>
</dbReference>
<dbReference type="InterPro" id="IPR024567">
    <property type="entry name" value="RNase_HII/HIII_dom"/>
</dbReference>
<dbReference type="InterPro" id="IPR012337">
    <property type="entry name" value="RNaseH-like_sf"/>
</dbReference>
<dbReference type="InterPro" id="IPR036397">
    <property type="entry name" value="RNaseH_sf"/>
</dbReference>
<dbReference type="NCBIfam" id="NF000595">
    <property type="entry name" value="PRK00015.1-3"/>
    <property type="match status" value="1"/>
</dbReference>
<dbReference type="NCBIfam" id="NF000598">
    <property type="entry name" value="PRK00015.2-2"/>
    <property type="match status" value="1"/>
</dbReference>
<dbReference type="NCBIfam" id="NF000600">
    <property type="entry name" value="PRK00015.2-4"/>
    <property type="match status" value="1"/>
</dbReference>
<dbReference type="PANTHER" id="PTHR10954">
    <property type="entry name" value="RIBONUCLEASE H2 SUBUNIT A"/>
    <property type="match status" value="1"/>
</dbReference>
<dbReference type="PANTHER" id="PTHR10954:SF18">
    <property type="entry name" value="RIBONUCLEASE HII"/>
    <property type="match status" value="1"/>
</dbReference>
<dbReference type="Pfam" id="PF01351">
    <property type="entry name" value="RNase_HII"/>
    <property type="match status" value="1"/>
</dbReference>
<dbReference type="SUPFAM" id="SSF53098">
    <property type="entry name" value="Ribonuclease H-like"/>
    <property type="match status" value="1"/>
</dbReference>
<dbReference type="PROSITE" id="PS51975">
    <property type="entry name" value="RNASE_H_2"/>
    <property type="match status" value="1"/>
</dbReference>
<reference key="1">
    <citation type="journal article" date="2007" name="Genome Res.">
        <title>Reductive evolution and niche adaptation inferred from the genome of Mycobacterium ulcerans, the causative agent of Buruli ulcer.</title>
        <authorList>
            <person name="Stinear T.P."/>
            <person name="Seemann T."/>
            <person name="Pidot S."/>
            <person name="Frigui W."/>
            <person name="Reysset G."/>
            <person name="Garnier T."/>
            <person name="Meurice G."/>
            <person name="Simon D."/>
            <person name="Bouchier C."/>
            <person name="Ma L."/>
            <person name="Tichit M."/>
            <person name="Porter J.L."/>
            <person name="Ryan J."/>
            <person name="Johnson P.D.R."/>
            <person name="Davies J.K."/>
            <person name="Jenkin G.A."/>
            <person name="Small P.L.C."/>
            <person name="Jones L.M."/>
            <person name="Tekaia F."/>
            <person name="Laval F."/>
            <person name="Daffe M."/>
            <person name="Parkhill J."/>
            <person name="Cole S.T."/>
        </authorList>
    </citation>
    <scope>NUCLEOTIDE SEQUENCE [LARGE SCALE GENOMIC DNA]</scope>
    <source>
        <strain>Agy99</strain>
    </source>
</reference>
<accession>A0PQ70</accession>
<proteinExistence type="inferred from homology"/>
<feature type="chain" id="PRO_1000031169" description="Ribonuclease HII">
    <location>
        <begin position="1"/>
        <end position="239"/>
    </location>
</feature>
<feature type="domain" description="RNase H type-2" evidence="2">
    <location>
        <begin position="30"/>
        <end position="221"/>
    </location>
</feature>
<feature type="region of interest" description="Disordered" evidence="3">
    <location>
        <begin position="217"/>
        <end position="239"/>
    </location>
</feature>
<feature type="compositionally biased region" description="Basic and acidic residues" evidence="3">
    <location>
        <begin position="225"/>
        <end position="239"/>
    </location>
</feature>
<feature type="binding site" evidence="1">
    <location>
        <position position="36"/>
    </location>
    <ligand>
        <name>a divalent metal cation</name>
        <dbReference type="ChEBI" id="CHEBI:60240"/>
    </ligand>
</feature>
<feature type="binding site" evidence="1">
    <location>
        <position position="37"/>
    </location>
    <ligand>
        <name>a divalent metal cation</name>
        <dbReference type="ChEBI" id="CHEBI:60240"/>
    </ligand>
</feature>
<feature type="binding site" evidence="1">
    <location>
        <position position="130"/>
    </location>
    <ligand>
        <name>a divalent metal cation</name>
        <dbReference type="ChEBI" id="CHEBI:60240"/>
    </ligand>
</feature>
<protein>
    <recommendedName>
        <fullName evidence="1">Ribonuclease HII</fullName>
        <shortName evidence="1">RNase HII</shortName>
        <ecNumber evidence="1">3.1.26.4</ecNumber>
    </recommendedName>
</protein>
<sequence>MATTWPPRTVIRKSSGLRTLESALQRSGLGPVAGVDEVGRGACAGPLVVAACALGPNRYESLAALDDSKKLTEKTREKLFPLICRYALAYHVVFIPSVEVDRRGVHVANIEGMRRAVAGLSVRPGYVLSDGFRVPGLSVPSLPVIGGDAAAACIAAASVLAKVSRDRLMVAMDTQYPGYGFAEHKGYSTRAHTLALTQLGPCPEHRRSFINVRRVATRSNGAATAEREADPPQERDGTG</sequence>
<comment type="function">
    <text evidence="1">Endonuclease that specifically degrades the RNA of RNA-DNA hybrids.</text>
</comment>
<comment type="catalytic activity">
    <reaction evidence="1">
        <text>Endonucleolytic cleavage to 5'-phosphomonoester.</text>
        <dbReference type="EC" id="3.1.26.4"/>
    </reaction>
</comment>
<comment type="cofactor">
    <cofactor evidence="1">
        <name>Mn(2+)</name>
        <dbReference type="ChEBI" id="CHEBI:29035"/>
    </cofactor>
    <cofactor evidence="1">
        <name>Mg(2+)</name>
        <dbReference type="ChEBI" id="CHEBI:18420"/>
    </cofactor>
    <text evidence="1">Manganese or magnesium. Binds 1 divalent metal ion per monomer in the absence of substrate. May bind a second metal ion after substrate binding.</text>
</comment>
<comment type="subcellular location">
    <subcellularLocation>
        <location evidence="1">Cytoplasm</location>
    </subcellularLocation>
</comment>
<comment type="similarity">
    <text evidence="1">Belongs to the RNase HII family.</text>
</comment>
<organism>
    <name type="scientific">Mycobacterium ulcerans (strain Agy99)</name>
    <dbReference type="NCBI Taxonomy" id="362242"/>
    <lineage>
        <taxon>Bacteria</taxon>
        <taxon>Bacillati</taxon>
        <taxon>Actinomycetota</taxon>
        <taxon>Actinomycetes</taxon>
        <taxon>Mycobacteriales</taxon>
        <taxon>Mycobacteriaceae</taxon>
        <taxon>Mycobacterium</taxon>
        <taxon>Mycobacterium ulcerans group</taxon>
    </lineage>
</organism>
<name>RNH2_MYCUA</name>
<keyword id="KW-0963">Cytoplasm</keyword>
<keyword id="KW-0255">Endonuclease</keyword>
<keyword id="KW-0378">Hydrolase</keyword>
<keyword id="KW-0464">Manganese</keyword>
<keyword id="KW-0479">Metal-binding</keyword>
<keyword id="KW-0540">Nuclease</keyword>